<name>FOXO1_HUMAN</name>
<proteinExistence type="evidence at protein level"/>
<protein>
    <recommendedName>
        <fullName evidence="31">Forkhead box protein O1</fullName>
    </recommendedName>
    <alternativeName>
        <fullName>Forkhead box protein O1A</fullName>
    </alternativeName>
    <alternativeName>
        <fullName evidence="29">Forkhead in rhabdomyosarcoma</fullName>
    </alternativeName>
</protein>
<dbReference type="EMBL" id="U02310">
    <property type="protein sequence ID" value="AAA03629.1"/>
    <property type="molecule type" value="mRNA"/>
</dbReference>
<dbReference type="EMBL" id="AF032885">
    <property type="protein sequence ID" value="AAC39591.1"/>
    <property type="molecule type" value="mRNA"/>
</dbReference>
<dbReference type="EMBL" id="BT007455">
    <property type="protein sequence ID" value="AAP36123.1"/>
    <property type="molecule type" value="mRNA"/>
</dbReference>
<dbReference type="EMBL" id="AL355132">
    <property type="status" value="NOT_ANNOTATED_CDS"/>
    <property type="molecule type" value="Genomic_DNA"/>
</dbReference>
<dbReference type="EMBL" id="AL133318">
    <property type="status" value="NOT_ANNOTATED_CDS"/>
    <property type="molecule type" value="Genomic_DNA"/>
</dbReference>
<dbReference type="EMBL" id="BC021981">
    <property type="protein sequence ID" value="AAH21981.1"/>
    <property type="molecule type" value="mRNA"/>
</dbReference>
<dbReference type="EMBL" id="BC070065">
    <property type="protein sequence ID" value="AAH70065.3"/>
    <property type="molecule type" value="mRNA"/>
</dbReference>
<dbReference type="CCDS" id="CCDS9371.1"/>
<dbReference type="PIR" id="S40521">
    <property type="entry name" value="S40521"/>
</dbReference>
<dbReference type="RefSeq" id="NP_002006.2">
    <property type="nucleotide sequence ID" value="NM_002015.3"/>
</dbReference>
<dbReference type="PDB" id="3CO6">
    <property type="method" value="X-ray"/>
    <property type="resolution" value="2.10 A"/>
    <property type="chains" value="C=151-249"/>
</dbReference>
<dbReference type="PDB" id="3CO7">
    <property type="method" value="X-ray"/>
    <property type="resolution" value="2.91 A"/>
    <property type="chains" value="C/F=151-266"/>
</dbReference>
<dbReference type="PDB" id="3COA">
    <property type="method" value="X-ray"/>
    <property type="resolution" value="2.20 A"/>
    <property type="chains" value="C/F=151-266"/>
</dbReference>
<dbReference type="PDB" id="4LG0">
    <property type="method" value="X-ray"/>
    <property type="resolution" value="2.19 A"/>
    <property type="chains" value="A=143-270"/>
</dbReference>
<dbReference type="PDB" id="5DUI">
    <property type="method" value="X-ray"/>
    <property type="resolution" value="2.31 A"/>
    <property type="chains" value="A/B=151-259"/>
</dbReference>
<dbReference type="PDB" id="6LBI">
    <property type="method" value="X-ray"/>
    <property type="resolution" value="3.07 A"/>
    <property type="chains" value="C/D/G/H/K/L=151-265"/>
</dbReference>
<dbReference type="PDB" id="6QVW">
    <property type="method" value="NMR"/>
    <property type="chains" value="A=159-272"/>
</dbReference>
<dbReference type="PDB" id="6QZR">
    <property type="method" value="X-ray"/>
    <property type="resolution" value="2.30 A"/>
    <property type="chains" value="J/M/N/O/P/R/T/U=19-29"/>
</dbReference>
<dbReference type="PDB" id="6QZS">
    <property type="method" value="X-ray"/>
    <property type="resolution" value="1.90 A"/>
    <property type="chains" value="C/P=251-262"/>
</dbReference>
<dbReference type="PDB" id="8A62">
    <property type="method" value="X-ray"/>
    <property type="resolution" value="1.60 A"/>
    <property type="chains" value="B=20-29"/>
</dbReference>
<dbReference type="PDB" id="8A65">
    <property type="method" value="X-ray"/>
    <property type="resolution" value="1.60 A"/>
    <property type="chains" value="B=21-28"/>
</dbReference>
<dbReference type="PDBsum" id="3CO6"/>
<dbReference type="PDBsum" id="3CO7"/>
<dbReference type="PDBsum" id="3COA"/>
<dbReference type="PDBsum" id="4LG0"/>
<dbReference type="PDBsum" id="5DUI"/>
<dbReference type="PDBsum" id="6LBI"/>
<dbReference type="PDBsum" id="6QVW"/>
<dbReference type="PDBsum" id="6QZR"/>
<dbReference type="PDBsum" id="6QZS"/>
<dbReference type="PDBsum" id="8A62"/>
<dbReference type="PDBsum" id="8A65"/>
<dbReference type="SMR" id="Q12778"/>
<dbReference type="BioGRID" id="108597">
    <property type="interactions" value="334"/>
</dbReference>
<dbReference type="CORUM" id="Q12778"/>
<dbReference type="DIP" id="DIP-35654N"/>
<dbReference type="FunCoup" id="Q12778">
    <property type="interactions" value="2941"/>
</dbReference>
<dbReference type="IntAct" id="Q12778">
    <property type="interactions" value="42"/>
</dbReference>
<dbReference type="MINT" id="Q12778"/>
<dbReference type="STRING" id="9606.ENSP00000368880"/>
<dbReference type="BindingDB" id="Q12778"/>
<dbReference type="ChEMBL" id="CHEMBL5294"/>
<dbReference type="GlyConnect" id="2844">
    <property type="glycosylation" value="1 O-GlcNAc glycan (4 sites)"/>
</dbReference>
<dbReference type="GlyCosmos" id="Q12778">
    <property type="glycosylation" value="7 sites, 1 glycan"/>
</dbReference>
<dbReference type="GlyGen" id="Q12778">
    <property type="glycosylation" value="7 sites, 1 O-linked glycan (7 sites)"/>
</dbReference>
<dbReference type="iPTMnet" id="Q12778"/>
<dbReference type="PhosphoSitePlus" id="Q12778"/>
<dbReference type="BioMuta" id="FOXO1"/>
<dbReference type="DMDM" id="116241368"/>
<dbReference type="CPTAC" id="CPTAC-1323"/>
<dbReference type="CPTAC" id="non-CPTAC-5703"/>
<dbReference type="jPOST" id="Q12778"/>
<dbReference type="MassIVE" id="Q12778"/>
<dbReference type="PaxDb" id="9606-ENSP00000368880"/>
<dbReference type="PeptideAtlas" id="Q12778"/>
<dbReference type="ProteomicsDB" id="58922"/>
<dbReference type="Pumba" id="Q12778"/>
<dbReference type="Antibodypedia" id="645">
    <property type="antibodies" value="2165 antibodies from 52 providers"/>
</dbReference>
<dbReference type="CPTC" id="Q12778">
    <property type="antibodies" value="3 antibodies"/>
</dbReference>
<dbReference type="DNASU" id="2308"/>
<dbReference type="Ensembl" id="ENST00000379561.6">
    <property type="protein sequence ID" value="ENSP00000368880.4"/>
    <property type="gene ID" value="ENSG00000150907.10"/>
</dbReference>
<dbReference type="GeneID" id="2308"/>
<dbReference type="KEGG" id="hsa:2308"/>
<dbReference type="MANE-Select" id="ENST00000379561.6">
    <property type="protein sequence ID" value="ENSP00000368880.4"/>
    <property type="RefSeq nucleotide sequence ID" value="NM_002015.4"/>
    <property type="RefSeq protein sequence ID" value="NP_002006.2"/>
</dbReference>
<dbReference type="UCSC" id="uc001uxl.5">
    <property type="organism name" value="human"/>
</dbReference>
<dbReference type="AGR" id="HGNC:3819"/>
<dbReference type="CTD" id="2308"/>
<dbReference type="DisGeNET" id="2308"/>
<dbReference type="GeneCards" id="FOXO1"/>
<dbReference type="HGNC" id="HGNC:3819">
    <property type="gene designation" value="FOXO1"/>
</dbReference>
<dbReference type="HPA" id="ENSG00000150907">
    <property type="expression patterns" value="Tissue enhanced (skeletal)"/>
</dbReference>
<dbReference type="MalaCards" id="FOXO1"/>
<dbReference type="MIM" id="136533">
    <property type="type" value="gene"/>
</dbReference>
<dbReference type="MIM" id="268220">
    <property type="type" value="phenotype"/>
</dbReference>
<dbReference type="neXtProt" id="NX_Q12778"/>
<dbReference type="OpenTargets" id="ENSG00000150907"/>
<dbReference type="Orphanet" id="99756">
    <property type="disease" value="Alveolar rhabdomyosarcoma"/>
</dbReference>
<dbReference type="PharmGKB" id="PA28237"/>
<dbReference type="VEuPathDB" id="HostDB:ENSG00000150907"/>
<dbReference type="eggNOG" id="KOG2294">
    <property type="taxonomic scope" value="Eukaryota"/>
</dbReference>
<dbReference type="GeneTree" id="ENSGT00940000161558"/>
<dbReference type="HOGENOM" id="CLU_023456_1_1_1"/>
<dbReference type="InParanoid" id="Q12778"/>
<dbReference type="OMA" id="SHTMQMN"/>
<dbReference type="OrthoDB" id="5954824at2759"/>
<dbReference type="PAN-GO" id="Q12778">
    <property type="GO annotations" value="5 GO annotations based on evolutionary models"/>
</dbReference>
<dbReference type="PhylomeDB" id="Q12778"/>
<dbReference type="TreeFam" id="TF315583"/>
<dbReference type="PathwayCommons" id="Q12778"/>
<dbReference type="Reactome" id="R-HSA-198693">
    <property type="pathway name" value="AKT phosphorylates targets in the nucleus"/>
</dbReference>
<dbReference type="Reactome" id="R-HSA-210745">
    <property type="pathway name" value="Regulation of gene expression in beta cells"/>
</dbReference>
<dbReference type="Reactome" id="R-HSA-211163">
    <property type="pathway name" value="AKT-mediated inactivation of FOXO1A"/>
</dbReference>
<dbReference type="Reactome" id="R-HSA-5674400">
    <property type="pathway name" value="Constitutive Signaling by AKT1 E17K in Cancer"/>
</dbReference>
<dbReference type="Reactome" id="R-HSA-5687128">
    <property type="pathway name" value="MAPK6/MAPK4 signaling"/>
</dbReference>
<dbReference type="Reactome" id="R-HSA-6785807">
    <property type="pathway name" value="Interleukin-4 and Interleukin-13 signaling"/>
</dbReference>
<dbReference type="Reactome" id="R-HSA-9614399">
    <property type="pathway name" value="Regulation of localization of FOXO transcription factors"/>
</dbReference>
<dbReference type="Reactome" id="R-HSA-9614657">
    <property type="pathway name" value="FOXO-mediated transcription of cell death genes"/>
</dbReference>
<dbReference type="Reactome" id="R-HSA-9615017">
    <property type="pathway name" value="FOXO-mediated transcription of oxidative stress, metabolic and neuronal genes"/>
</dbReference>
<dbReference type="Reactome" id="R-HSA-9617629">
    <property type="pathway name" value="Regulation of FOXO transcriptional activity by acetylation"/>
</dbReference>
<dbReference type="Reactome" id="R-HSA-9617828">
    <property type="pathway name" value="FOXO-mediated transcription of cell cycle genes"/>
</dbReference>
<dbReference type="SignaLink" id="Q12778"/>
<dbReference type="SIGNOR" id="Q12778"/>
<dbReference type="BioGRID-ORCS" id="2308">
    <property type="hits" value="19 hits in 1175 CRISPR screens"/>
</dbReference>
<dbReference type="ChiTaRS" id="FOXO1">
    <property type="organism name" value="human"/>
</dbReference>
<dbReference type="EvolutionaryTrace" id="Q12778"/>
<dbReference type="GeneWiki" id="FOXO1"/>
<dbReference type="GenomeRNAi" id="2308"/>
<dbReference type="Pharos" id="Q12778">
    <property type="development level" value="Tbio"/>
</dbReference>
<dbReference type="PRO" id="PR:Q12778"/>
<dbReference type="Proteomes" id="UP000005640">
    <property type="component" value="Chromosome 13"/>
</dbReference>
<dbReference type="RNAct" id="Q12778">
    <property type="molecule type" value="protein"/>
</dbReference>
<dbReference type="Bgee" id="ENSG00000150907">
    <property type="expression patterns" value="Expressed in decidua and 219 other cell types or tissues"/>
</dbReference>
<dbReference type="GO" id="GO:0000785">
    <property type="term" value="C:chromatin"/>
    <property type="evidence" value="ECO:0000247"/>
    <property type="project" value="NTNU_SB"/>
</dbReference>
<dbReference type="GO" id="GO:0005737">
    <property type="term" value="C:cytoplasm"/>
    <property type="evidence" value="ECO:0000314"/>
    <property type="project" value="UniProtKB"/>
</dbReference>
<dbReference type="GO" id="GO:0005829">
    <property type="term" value="C:cytosol"/>
    <property type="evidence" value="ECO:0000250"/>
    <property type="project" value="UniProtKB"/>
</dbReference>
<dbReference type="GO" id="GO:0005739">
    <property type="term" value="C:mitochondrion"/>
    <property type="evidence" value="ECO:0000250"/>
    <property type="project" value="UniProtKB"/>
</dbReference>
<dbReference type="GO" id="GO:0005654">
    <property type="term" value="C:nucleoplasm"/>
    <property type="evidence" value="ECO:0000304"/>
    <property type="project" value="Reactome"/>
</dbReference>
<dbReference type="GO" id="GO:0005634">
    <property type="term" value="C:nucleus"/>
    <property type="evidence" value="ECO:0000314"/>
    <property type="project" value="UniProtKB"/>
</dbReference>
<dbReference type="GO" id="GO:0008013">
    <property type="term" value="F:beta-catenin binding"/>
    <property type="evidence" value="ECO:0000314"/>
    <property type="project" value="ParkinsonsUK-UCL"/>
</dbReference>
<dbReference type="GO" id="GO:0003682">
    <property type="term" value="F:chromatin binding"/>
    <property type="evidence" value="ECO:0000250"/>
    <property type="project" value="UniProtKB"/>
</dbReference>
<dbReference type="GO" id="GO:0031490">
    <property type="term" value="F:chromatin DNA binding"/>
    <property type="evidence" value="ECO:0007669"/>
    <property type="project" value="Ensembl"/>
</dbReference>
<dbReference type="GO" id="GO:0001228">
    <property type="term" value="F:DNA-binding transcription activator activity, RNA polymerase II-specific"/>
    <property type="evidence" value="ECO:0000314"/>
    <property type="project" value="UniProtKB"/>
</dbReference>
<dbReference type="GO" id="GO:0003700">
    <property type="term" value="F:DNA-binding transcription factor activity"/>
    <property type="evidence" value="ECO:0000314"/>
    <property type="project" value="UniProt"/>
</dbReference>
<dbReference type="GO" id="GO:0000981">
    <property type="term" value="F:DNA-binding transcription factor activity, RNA polymerase II-specific"/>
    <property type="evidence" value="ECO:0000247"/>
    <property type="project" value="NTNU_SB"/>
</dbReference>
<dbReference type="GO" id="GO:0001227">
    <property type="term" value="F:DNA-binding transcription repressor activity, RNA polymerase II-specific"/>
    <property type="evidence" value="ECO:0007669"/>
    <property type="project" value="Ensembl"/>
</dbReference>
<dbReference type="GO" id="GO:0003676">
    <property type="term" value="F:nucleic acid binding"/>
    <property type="evidence" value="ECO:0000269"/>
    <property type="project" value="DisProt"/>
</dbReference>
<dbReference type="GO" id="GO:1990841">
    <property type="term" value="F:promoter-specific chromatin binding"/>
    <property type="evidence" value="ECO:0007669"/>
    <property type="project" value="Ensembl"/>
</dbReference>
<dbReference type="GO" id="GO:0051721">
    <property type="term" value="F:protein phosphatase 2A binding"/>
    <property type="evidence" value="ECO:0000250"/>
    <property type="project" value="UniProtKB"/>
</dbReference>
<dbReference type="GO" id="GO:0000978">
    <property type="term" value="F:RNA polymerase II cis-regulatory region sequence-specific DNA binding"/>
    <property type="evidence" value="ECO:0000318"/>
    <property type="project" value="GO_Central"/>
</dbReference>
<dbReference type="GO" id="GO:0043565">
    <property type="term" value="F:sequence-specific DNA binding"/>
    <property type="evidence" value="ECO:0000314"/>
    <property type="project" value="UniProtKB"/>
</dbReference>
<dbReference type="GO" id="GO:0031625">
    <property type="term" value="F:ubiquitin protein ligase binding"/>
    <property type="evidence" value="ECO:0000353"/>
    <property type="project" value="UniProtKB"/>
</dbReference>
<dbReference type="GO" id="GO:0006915">
    <property type="term" value="P:apoptotic process"/>
    <property type="evidence" value="ECO:0000315"/>
    <property type="project" value="UniProtKB"/>
</dbReference>
<dbReference type="GO" id="GO:0006914">
    <property type="term" value="P:autophagy"/>
    <property type="evidence" value="ECO:0007669"/>
    <property type="project" value="UniProtKB-KW"/>
</dbReference>
<dbReference type="GO" id="GO:0001568">
    <property type="term" value="P:blood vessel development"/>
    <property type="evidence" value="ECO:0007669"/>
    <property type="project" value="Ensembl"/>
</dbReference>
<dbReference type="GO" id="GO:0060070">
    <property type="term" value="P:canonical Wnt signaling pathway"/>
    <property type="evidence" value="ECO:0007669"/>
    <property type="project" value="Ensembl"/>
</dbReference>
<dbReference type="GO" id="GO:0070417">
    <property type="term" value="P:cellular response to cold"/>
    <property type="evidence" value="ECO:0000250"/>
    <property type="project" value="UniProtKB"/>
</dbReference>
<dbReference type="GO" id="GO:0071455">
    <property type="term" value="P:cellular response to hyperoxia"/>
    <property type="evidence" value="ECO:0000314"/>
    <property type="project" value="UniProtKB"/>
</dbReference>
<dbReference type="GO" id="GO:0032869">
    <property type="term" value="P:cellular response to insulin stimulus"/>
    <property type="evidence" value="ECO:0000250"/>
    <property type="project" value="UniProtKB"/>
</dbReference>
<dbReference type="GO" id="GO:0071732">
    <property type="term" value="P:cellular response to nitric oxide"/>
    <property type="evidence" value="ECO:0000250"/>
    <property type="project" value="UniProtKB"/>
</dbReference>
<dbReference type="GO" id="GO:0034599">
    <property type="term" value="P:cellular response to oxidative stress"/>
    <property type="evidence" value="ECO:0000250"/>
    <property type="project" value="UniProtKB"/>
</dbReference>
<dbReference type="GO" id="GO:0009267">
    <property type="term" value="P:cellular response to starvation"/>
    <property type="evidence" value="ECO:0000314"/>
    <property type="project" value="UniProtKB"/>
</dbReference>
<dbReference type="GO" id="GO:0006974">
    <property type="term" value="P:DNA damage response"/>
    <property type="evidence" value="ECO:0000250"/>
    <property type="project" value="UniProtKB"/>
</dbReference>
<dbReference type="GO" id="GO:0097009">
    <property type="term" value="P:energy homeostasis"/>
    <property type="evidence" value="ECO:0000250"/>
    <property type="project" value="UniProtKB"/>
</dbReference>
<dbReference type="GO" id="GO:0045444">
    <property type="term" value="P:fat cell differentiation"/>
    <property type="evidence" value="ECO:0000250"/>
    <property type="project" value="UniProtKB"/>
</dbReference>
<dbReference type="GO" id="GO:0010467">
    <property type="term" value="P:gene expression"/>
    <property type="evidence" value="ECO:0007669"/>
    <property type="project" value="Ensembl"/>
</dbReference>
<dbReference type="GO" id="GO:0008286">
    <property type="term" value="P:insulin receptor signaling pathway"/>
    <property type="evidence" value="ECO:0000250"/>
    <property type="project" value="UniProtKB"/>
</dbReference>
<dbReference type="GO" id="GO:0001678">
    <property type="term" value="P:intracellular glucose homeostasis"/>
    <property type="evidence" value="ECO:0000250"/>
    <property type="project" value="UniProtKB"/>
</dbReference>
<dbReference type="GO" id="GO:0043066">
    <property type="term" value="P:negative regulation of apoptotic process"/>
    <property type="evidence" value="ECO:0000314"/>
    <property type="project" value="UniProtKB"/>
</dbReference>
<dbReference type="GO" id="GO:0090090">
    <property type="term" value="P:negative regulation of canonical Wnt signaling pathway"/>
    <property type="evidence" value="ECO:0007669"/>
    <property type="project" value="Ensembl"/>
</dbReference>
<dbReference type="GO" id="GO:1903243">
    <property type="term" value="P:negative regulation of cardiac muscle hypertrophy in response to stress"/>
    <property type="evidence" value="ECO:0000250"/>
    <property type="project" value="UniProtKB"/>
</dbReference>
<dbReference type="GO" id="GO:0045892">
    <property type="term" value="P:negative regulation of DNA-templated transcription"/>
    <property type="evidence" value="ECO:0000250"/>
    <property type="project" value="UniProtKB"/>
</dbReference>
<dbReference type="GO" id="GO:0045599">
    <property type="term" value="P:negative regulation of fat cell differentiation"/>
    <property type="evidence" value="ECO:0000250"/>
    <property type="project" value="UniProtKB"/>
</dbReference>
<dbReference type="GO" id="GO:0046676">
    <property type="term" value="P:negative regulation of insulin secretion"/>
    <property type="evidence" value="ECO:0000250"/>
    <property type="project" value="UniProtKB"/>
</dbReference>
<dbReference type="GO" id="GO:0032873">
    <property type="term" value="P:negative regulation of stress-activated MAPK cascade"/>
    <property type="evidence" value="ECO:0000314"/>
    <property type="project" value="BHF-UCL"/>
</dbReference>
<dbReference type="GO" id="GO:0097150">
    <property type="term" value="P:neuronal stem cell population maintenance"/>
    <property type="evidence" value="ECO:0007669"/>
    <property type="project" value="Ensembl"/>
</dbReference>
<dbReference type="GO" id="GO:0043065">
    <property type="term" value="P:positive regulation of apoptotic process"/>
    <property type="evidence" value="ECO:0000315"/>
    <property type="project" value="UniProtKB"/>
</dbReference>
<dbReference type="GO" id="GO:0010508">
    <property type="term" value="P:positive regulation of autophagy"/>
    <property type="evidence" value="ECO:0000315"/>
    <property type="project" value="UniProtKB"/>
</dbReference>
<dbReference type="GO" id="GO:0045893">
    <property type="term" value="P:positive regulation of DNA-templated transcription"/>
    <property type="evidence" value="ECO:0000314"/>
    <property type="project" value="UniProtKB"/>
</dbReference>
<dbReference type="GO" id="GO:0045722">
    <property type="term" value="P:positive regulation of gluconeogenesis"/>
    <property type="evidence" value="ECO:0000314"/>
    <property type="project" value="UniProtKB"/>
</dbReference>
<dbReference type="GO" id="GO:0045732">
    <property type="term" value="P:positive regulation of protein catabolic process"/>
    <property type="evidence" value="ECO:0000315"/>
    <property type="project" value="UniProtKB"/>
</dbReference>
<dbReference type="GO" id="GO:0034393">
    <property type="term" value="P:positive regulation of smooth muscle cell apoptotic process"/>
    <property type="evidence" value="ECO:0000250"/>
    <property type="project" value="UniProtKB"/>
</dbReference>
<dbReference type="GO" id="GO:0045944">
    <property type="term" value="P:positive regulation of transcription by RNA polymerase II"/>
    <property type="evidence" value="ECO:0000314"/>
    <property type="project" value="UniProtKB"/>
</dbReference>
<dbReference type="GO" id="GO:0006473">
    <property type="term" value="P:protein acetylation"/>
    <property type="evidence" value="ECO:0000250"/>
    <property type="project" value="UniProtKB"/>
</dbReference>
<dbReference type="GO" id="GO:2000177">
    <property type="term" value="P:regulation of neural precursor cell proliferation"/>
    <property type="evidence" value="ECO:0007669"/>
    <property type="project" value="Ensembl"/>
</dbReference>
<dbReference type="GO" id="GO:2000377">
    <property type="term" value="P:regulation of reactive oxygen species metabolic process"/>
    <property type="evidence" value="ECO:0007669"/>
    <property type="project" value="Ensembl"/>
</dbReference>
<dbReference type="GO" id="GO:0006357">
    <property type="term" value="P:regulation of transcription by RNA polymerase II"/>
    <property type="evidence" value="ECO:0000318"/>
    <property type="project" value="GO_Central"/>
</dbReference>
<dbReference type="GO" id="GO:0060260">
    <property type="term" value="P:regulation of transcription initiation by RNA polymerase II"/>
    <property type="evidence" value="ECO:0000250"/>
    <property type="project" value="UniProtKB"/>
</dbReference>
<dbReference type="GO" id="GO:0070542">
    <property type="term" value="P:response to fatty acid"/>
    <property type="evidence" value="ECO:0000250"/>
    <property type="project" value="UniProtKB"/>
</dbReference>
<dbReference type="GO" id="GO:0001659">
    <property type="term" value="P:temperature homeostasis"/>
    <property type="evidence" value="ECO:0000250"/>
    <property type="project" value="UniProtKB"/>
</dbReference>
<dbReference type="CDD" id="cd20060">
    <property type="entry name" value="FH_FOXO1"/>
    <property type="match status" value="1"/>
</dbReference>
<dbReference type="DisProt" id="DP01132"/>
<dbReference type="FunFam" id="1.10.10.10:FF:000032">
    <property type="entry name" value="Forkhead box protein O4"/>
    <property type="match status" value="1"/>
</dbReference>
<dbReference type="Gene3D" id="1.10.10.10">
    <property type="entry name" value="Winged helix-like DNA-binding domain superfamily/Winged helix DNA-binding domain"/>
    <property type="match status" value="1"/>
</dbReference>
<dbReference type="IDEAL" id="IID00464"/>
<dbReference type="InterPro" id="IPR047408">
    <property type="entry name" value="FH_FOXO1"/>
</dbReference>
<dbReference type="InterPro" id="IPR001766">
    <property type="entry name" value="Fork_head_dom"/>
</dbReference>
<dbReference type="InterPro" id="IPR032067">
    <property type="entry name" value="FOXO-TAD"/>
</dbReference>
<dbReference type="InterPro" id="IPR032068">
    <property type="entry name" value="FOXO_KIX-bd"/>
</dbReference>
<dbReference type="InterPro" id="IPR030456">
    <property type="entry name" value="TF_fork_head_CS_2"/>
</dbReference>
<dbReference type="InterPro" id="IPR036388">
    <property type="entry name" value="WH-like_DNA-bd_sf"/>
</dbReference>
<dbReference type="InterPro" id="IPR036390">
    <property type="entry name" value="WH_DNA-bd_sf"/>
</dbReference>
<dbReference type="PANTHER" id="PTHR45767">
    <property type="entry name" value="FORKHEAD BOX PROTEIN O"/>
    <property type="match status" value="1"/>
</dbReference>
<dbReference type="PANTHER" id="PTHR45767:SF1">
    <property type="entry name" value="FORKHEAD BOX PROTEIN O1"/>
    <property type="match status" value="1"/>
</dbReference>
<dbReference type="Pfam" id="PF00250">
    <property type="entry name" value="Forkhead"/>
    <property type="match status" value="1"/>
</dbReference>
<dbReference type="Pfam" id="PF16676">
    <property type="entry name" value="FOXO-TAD"/>
    <property type="match status" value="1"/>
</dbReference>
<dbReference type="Pfam" id="PF16675">
    <property type="entry name" value="FOXO_KIX_bdg"/>
    <property type="match status" value="1"/>
</dbReference>
<dbReference type="PRINTS" id="PR00053">
    <property type="entry name" value="FORKHEAD"/>
</dbReference>
<dbReference type="SMART" id="SM00339">
    <property type="entry name" value="FH"/>
    <property type="match status" value="1"/>
</dbReference>
<dbReference type="SUPFAM" id="SSF46785">
    <property type="entry name" value="Winged helix' DNA-binding domain"/>
    <property type="match status" value="1"/>
</dbReference>
<dbReference type="PROSITE" id="PS00658">
    <property type="entry name" value="FORK_HEAD_2"/>
    <property type="match status" value="1"/>
</dbReference>
<dbReference type="PROSITE" id="PS50039">
    <property type="entry name" value="FORK_HEAD_3"/>
    <property type="match status" value="1"/>
</dbReference>
<sequence length="655" mass="69662">MAEAPQVVEIDPDFEPLPRPRSCTWPLPRPEFSQSNSATSSPAPSGSAAANPDAAAGLPSASAAAVSADFMSNLSLLEESEDFPQAPGSVAAAVAAAAAAAATGGLCGDFQGPEAGCLHPAPPQPPPPGPLSQHPPVPPAAAGPLAGQPRKSSSSRRNAWGNLSYADLITKAIESSAEKRLTLSQIYEWMVKSVPYFKDKGDSNSSAGWKNSIRHNLSLHSKFIRVQNEGTGKSSWWMLNPEGGKSGKSPRRRAASMDNNSKFAKSRSRAAKKKASLQSGQEGAGDSPGSQFSKWPASPGSHSNDDFDNWSTFRPRTSSNASTISGRLSPIMTEQDDLGEGDVHSMVYPPSAAKMASTLPSLSEISNPENMENLLDNLNLLSSPTSLTVSTQSSPGTMMQQTPCYSFAPPNTSLNSPSPNYQKYTYGQSSMSPLPQMPIQTLQDNKSSYGGMSQYNCAPGLLKELLTSDSPPHNDIMTPVDPGVAQPNSRVLGQNVMMGPNSVMSTYGSQASHNKMMNPSSHTHPGHAQQTSAVNGRPLPHTVSTMPHTSGMNRLTQVKTPVQVPLPHPMQMSALGGYSSVSSCNGYGRMGLLHQEKLPSDLDGMFIERLDCDMESIIRNDLMDGDTLDFNFDNVLPNQSFPHSVKTTTHSWVSG</sequence>
<feature type="chain" id="PRO_0000091872" description="Forkhead box protein O1">
    <location>
        <begin position="1"/>
        <end position="655"/>
    </location>
</feature>
<feature type="DNA-binding region" description="Fork-head" evidence="4">
    <location>
        <begin position="159"/>
        <end position="235"/>
    </location>
</feature>
<feature type="region of interest" description="Disordered" evidence="5">
    <location>
        <begin position="1"/>
        <end position="63"/>
    </location>
</feature>
<feature type="region of interest" description="Disordered" evidence="5">
    <location>
        <begin position="116"/>
        <end position="158"/>
    </location>
</feature>
<feature type="region of interest" description="DNA-binding" evidence="17">
    <location>
        <begin position="211"/>
        <end position="218"/>
    </location>
</feature>
<feature type="region of interest" description="Disordered" evidence="5">
    <location>
        <begin position="234"/>
        <end position="344"/>
    </location>
</feature>
<feature type="region of interest" description="DNA-binding" evidence="17">
    <location>
        <begin position="234"/>
        <end position="237"/>
    </location>
</feature>
<feature type="region of interest" description="Sufficient for interaction with NLK" evidence="3">
    <location>
        <begin position="283"/>
        <end position="563"/>
    </location>
</feature>
<feature type="region of interest" description="Required for interaction with RUNX2" evidence="3">
    <location>
        <begin position="363"/>
        <end position="459"/>
    </location>
</feature>
<feature type="region of interest" description="Disordered" evidence="5">
    <location>
        <begin position="507"/>
        <end position="537"/>
    </location>
</feature>
<feature type="short sequence motif" description="Nuclear localization signal">
    <location>
        <begin position="251"/>
        <end position="253"/>
    </location>
</feature>
<feature type="short sequence motif" description="Required for interaction with SIRT1" evidence="3">
    <location>
        <begin position="462"/>
        <end position="466"/>
    </location>
</feature>
<feature type="compositionally biased region" description="Low complexity" evidence="5">
    <location>
        <begin position="33"/>
        <end position="63"/>
    </location>
</feature>
<feature type="compositionally biased region" description="Pro residues" evidence="5">
    <location>
        <begin position="120"/>
        <end position="141"/>
    </location>
</feature>
<feature type="compositionally biased region" description="Basic residues" evidence="5">
    <location>
        <begin position="264"/>
        <end position="275"/>
    </location>
</feature>
<feature type="compositionally biased region" description="Polar residues" evidence="5">
    <location>
        <begin position="309"/>
        <end position="326"/>
    </location>
</feature>
<feature type="compositionally biased region" description="Polar residues" evidence="5">
    <location>
        <begin position="507"/>
        <end position="534"/>
    </location>
</feature>
<feature type="site" description="DNA-binding" evidence="17">
    <location>
        <position position="158"/>
    </location>
</feature>
<feature type="site" description="DNA-binding" evidence="17">
    <location>
        <position position="165"/>
    </location>
</feature>
<feature type="site" description="DNA-binding" evidence="17">
    <location>
        <position position="225"/>
    </location>
</feature>
<feature type="modified residue" description="Phosphothreonine; by PKB/AKT1 or PKB/AKT2 and SGK1" evidence="6 8 10">
    <location>
        <position position="24"/>
    </location>
</feature>
<feature type="modified residue" description="Phosphoserine; by STK4/MST1" evidence="17 19 23">
    <location>
        <position position="212"/>
    </location>
</feature>
<feature type="modified residue" description="Phosphoserine; by STK4/MST1" evidence="17">
    <location>
        <position position="218"/>
    </location>
</feature>
<feature type="modified residue" description="Phosphoserine; by STK4/MST1" evidence="17">
    <location>
        <position position="234"/>
    </location>
</feature>
<feature type="modified residue" description="Phosphoserine; by STK4/MST1" evidence="17">
    <location>
        <position position="235"/>
    </location>
</feature>
<feature type="modified residue" description="N6-acetyllysine" evidence="3">
    <location>
        <position position="245"/>
    </location>
</feature>
<feature type="modified residue" description="N6-acetyllysine" evidence="3">
    <location>
        <position position="248"/>
    </location>
</feature>
<feature type="modified residue" description="Phosphoserine; by CDK1" evidence="16">
    <location>
        <position position="249"/>
    </location>
</feature>
<feature type="modified residue" description="Omega-N-methylarginine; by PRMT1" evidence="3">
    <location>
        <position position="251"/>
    </location>
</feature>
<feature type="modified residue" description="Omega-N-methylarginine; by PRMT1" evidence="3">
    <location>
        <position position="253"/>
    </location>
</feature>
<feature type="modified residue" description="Phosphoserine; by PKB/AKT1 and SGK1" evidence="6 7 8 10 25">
    <location>
        <position position="256"/>
    </location>
</feature>
<feature type="modified residue" description="N6-acetyllysine" evidence="21">
    <location>
        <position position="262"/>
    </location>
</feature>
<feature type="modified residue" description="N6-acetyllysine" evidence="21">
    <location>
        <position position="265"/>
    </location>
</feature>
<feature type="modified residue" description="N6-acetyllysine" evidence="21">
    <location>
        <position position="274"/>
    </location>
</feature>
<feature type="modified residue" description="Phosphoserine" evidence="33 34 35">
    <location>
        <position position="287"/>
    </location>
</feature>
<feature type="modified residue" description="Phosphoserine" evidence="3">
    <location>
        <position position="298"/>
    </location>
</feature>
<feature type="modified residue" description="Phosphoserine; by PKB/AKT1" evidence="6 8 10">
    <location>
        <position position="319"/>
    </location>
</feature>
<feature type="modified residue" description="Phosphoserine; by CK1 and SGK1" evidence="10">
    <location>
        <position position="322"/>
    </location>
</feature>
<feature type="modified residue" description="Phosphoserine; by CK1" evidence="10">
    <location>
        <position position="325"/>
    </location>
</feature>
<feature type="modified residue" description="Phosphoserine; by DYRK1A" evidence="9 10">
    <location>
        <position position="329"/>
    </location>
</feature>
<feature type="modified residue" description="Phosphothreonine" evidence="3">
    <location>
        <position position="333"/>
    </location>
</feature>
<feature type="modified residue" description="N6-acetyllysine" evidence="24">
    <location>
        <position position="423"/>
    </location>
</feature>
<feature type="mutagenesis site" description="Abolishes PKB/AKT1-mediated phosphorylation but does not prevent phosphorylation of Ser-256 or Ser-319. Also inhibits binding of 14-3-3 proteins. Nuclear in unstimulated cells, and little export to cytoplasm on IGF1 stimulation. Targeted to the nucleus and enhances transactivation; when associated with A-319. No effect on interaction with STUB1. Inhibits the PKB/AKT1-mediated activity towards other substrates but does not block the IGF1-activated 'T-308' of phosphorylation of PKB/AKT1; when associated with A-256 and A-319." evidence="8 11 20">
    <original>T</original>
    <variation>A</variation>
    <location>
        <position position="24"/>
    </location>
</feature>
<feature type="mutagenesis site" description="Abolishes STK4/MST1-mediated phosphorylation." evidence="19">
    <original>S</original>
    <variation>A</variation>
    <location>
        <position position="212"/>
    </location>
</feature>
<feature type="mutagenesis site" description="Disrupts DNA-binding; when associated with A-248." evidence="11">
    <original>K</original>
    <variation>A</variation>
    <location>
        <position position="245"/>
    </location>
</feature>
<feature type="mutagenesis site" description="Disrupts DNA-binding; when associated with A-245." evidence="11">
    <original>K</original>
    <variation>A</variation>
    <location>
        <position position="248"/>
    </location>
</feature>
<feature type="mutagenesis site" description="Impaired phosphorylation by CDK1." evidence="16 17">
    <original>S</original>
    <variation>A</variation>
    <location>
        <position position="249"/>
    </location>
</feature>
<feature type="mutagenesis site" description="No effect on DNA-binding." evidence="16 17">
    <original>S</original>
    <variation>E</variation>
    <location>
        <position position="249"/>
    </location>
</feature>
<feature type="mutagenesis site" description="No targeting to the nucleus and disruption of DNA-binding." evidence="11">
    <original>RRR</original>
    <variation>SAS</variation>
    <location>
        <begin position="251"/>
        <end position="253"/>
    </location>
</feature>
<feature type="mutagenesis site" description="Completely abolishes PKB/AKT1-mediated phosphorylation at all three sites, and inhibits binding of 14-3-3 proteins. Inhibits the PKB/AKT1-mediated activity towards other substrates but does not block the IGF1-activated 'T-308' of phosphorylation of PKB/AKT1; when associated with or without A-24 and A-319. Nuclear in unstimulated cells, and little export to cytoplasm on IGF1 stimulation. Abolishes the ability of IGF1 to suppress transactivation. Prevents T-24 and S-319 phosphorylation. Abolishes interaction with and ubiquitination by STUB1. Enhances transactivation; when associated with A-24 and A-319." evidence="8 11 13 20">
    <original>S</original>
    <variation>A</variation>
    <location>
        <position position="256"/>
    </location>
</feature>
<feature type="mutagenesis site" description="Reduces DNA binding, promotes nuclear exclusion and partially promotes T-24 and S-319 phosphorylation. Reduces DNA binding, does not promote nuclear exclusion but reduces transactivation; when associated with A-24 and A-319." evidence="8 11 13">
    <original>S</original>
    <variation>D</variation>
    <location>
        <position position="256"/>
    </location>
</feature>
<feature type="mutagenesis site" description="Inhibits interaction with ATG7 and FOXO1-acetylation-induced autophagic cell death; when associated with R-265 and R-274." evidence="11">
    <original>K</original>
    <variation>R</variation>
    <location>
        <position position="262"/>
    </location>
</feature>
<feature type="mutagenesis site" description="Inhibits interaction with ATG7 and FOXO1-acetylation-induced autophagic cell death; when associated with R-262 and R-274." evidence="11">
    <original>K</original>
    <variation>R</variation>
    <location>
        <position position="265"/>
    </location>
</feature>
<feature type="mutagenesis site" description="Inhibits interaction with ATG7 and FOXO1-acetylation-induced autophagic cell death; when associated with R-262 and R-265." evidence="11">
    <original>K</original>
    <variation>R</variation>
    <location>
        <position position="274"/>
    </location>
</feature>
<feature type="mutagenesis site" description="Abolishes PKB/AKT1-mediated phosphorylation but does not prevent phosphorylation of Ser-24 or Ser-256. Inhibits the PKB/AKT1-mediated activity towards other substrates but does not block the IGF1-activated 'T-308' of phosphorylation of PKB/AKT1; when associated with A-24 and A-256. Targeted to the nucleus and enhances transactivation; when associated with A-24. No effect on interaction with STUB1." evidence="8 11 20">
    <original>S</original>
    <variation>A</variation>
    <location>
        <position position="319"/>
    </location>
</feature>
<feature type="mutagenesis site" description="Targeted to the nucleus and enhances transactivation." evidence="9">
    <original>S</original>
    <variation>A</variation>
    <location>
        <position position="329"/>
    </location>
</feature>
<feature type="mutagenesis site" description="Abolished deacetylation by SIRT6." evidence="24">
    <original>K</original>
    <variation>R</variation>
    <location>
        <position position="423"/>
    </location>
</feature>
<feature type="mutagenesis site" description="Does not affect deacetylation by SIRT6." evidence="24">
    <original>K</original>
    <variation>R</variation>
    <location>
        <position position="446"/>
    </location>
</feature>
<feature type="mutagenesis site" description="Does not affect deacetylation by SIRT6." evidence="24">
    <original>K</original>
    <variation>R</variation>
    <location>
        <position position="463"/>
    </location>
</feature>
<feature type="mutagenesis site" description="Does not affect deacetylation by SIRT6." evidence="24">
    <original>K</original>
    <variation>R</variation>
    <location>
        <position position="515"/>
    </location>
</feature>
<feature type="sequence conflict" description="In Ref. 1; AAA03629." evidence="31" ref="1">
    <original>L</original>
    <variation>V</variation>
    <location>
        <position position="131"/>
    </location>
</feature>
<feature type="sequence conflict" description="In Ref. 5; AAH70065." evidence="31" ref="5">
    <original>V</original>
    <variation>M</variation>
    <location>
        <position position="343"/>
    </location>
</feature>
<feature type="strand" evidence="36">
    <location>
        <begin position="156"/>
        <end position="158"/>
    </location>
</feature>
<feature type="helix" evidence="36">
    <location>
        <begin position="165"/>
        <end position="175"/>
    </location>
</feature>
<feature type="strand" evidence="37">
    <location>
        <begin position="176"/>
        <end position="181"/>
    </location>
</feature>
<feature type="helix" evidence="36">
    <location>
        <begin position="183"/>
        <end position="193"/>
    </location>
</feature>
<feature type="helix" evidence="36">
    <location>
        <begin position="195"/>
        <end position="197"/>
    </location>
</feature>
<feature type="helix" evidence="36">
    <location>
        <begin position="203"/>
        <end position="219"/>
    </location>
</feature>
<feature type="strand" evidence="36">
    <location>
        <begin position="223"/>
        <end position="226"/>
    </location>
</feature>
<feature type="turn" evidence="36">
    <location>
        <begin position="230"/>
        <end position="232"/>
    </location>
</feature>
<feature type="strand" evidence="36">
    <location>
        <begin position="236"/>
        <end position="239"/>
    </location>
</feature>
<evidence type="ECO:0000250" key="1">
    <source>
        <dbReference type="UniProtKB" id="A4L7N3"/>
    </source>
</evidence>
<evidence type="ECO:0000250" key="2">
    <source>
        <dbReference type="UniProtKB" id="G3V7R4"/>
    </source>
</evidence>
<evidence type="ECO:0000250" key="3">
    <source>
        <dbReference type="UniProtKB" id="Q9R1E0"/>
    </source>
</evidence>
<evidence type="ECO:0000255" key="4">
    <source>
        <dbReference type="PROSITE-ProRule" id="PRU00089"/>
    </source>
</evidence>
<evidence type="ECO:0000256" key="5">
    <source>
        <dbReference type="SAM" id="MobiDB-lite"/>
    </source>
</evidence>
<evidence type="ECO:0000269" key="6">
    <source>
    </source>
</evidence>
<evidence type="ECO:0000269" key="7">
    <source>
    </source>
</evidence>
<evidence type="ECO:0000269" key="8">
    <source>
    </source>
</evidence>
<evidence type="ECO:0000269" key="9">
    <source>
    </source>
</evidence>
<evidence type="ECO:0000269" key="10">
    <source>
    </source>
</evidence>
<evidence type="ECO:0000269" key="11">
    <source>
    </source>
</evidence>
<evidence type="ECO:0000269" key="12">
    <source>
    </source>
</evidence>
<evidence type="ECO:0000269" key="13">
    <source>
    </source>
</evidence>
<evidence type="ECO:0000269" key="14">
    <source>
    </source>
</evidence>
<evidence type="ECO:0000269" key="15">
    <source>
    </source>
</evidence>
<evidence type="ECO:0000269" key="16">
    <source>
    </source>
</evidence>
<evidence type="ECO:0000269" key="17">
    <source>
    </source>
</evidence>
<evidence type="ECO:0000269" key="18">
    <source>
    </source>
</evidence>
<evidence type="ECO:0000269" key="19">
    <source>
    </source>
</evidence>
<evidence type="ECO:0000269" key="20">
    <source>
    </source>
</evidence>
<evidence type="ECO:0000269" key="21">
    <source>
    </source>
</evidence>
<evidence type="ECO:0000269" key="22">
    <source>
    </source>
</evidence>
<evidence type="ECO:0000269" key="23">
    <source>
    </source>
</evidence>
<evidence type="ECO:0000269" key="24">
    <source>
    </source>
</evidence>
<evidence type="ECO:0000269" key="25">
    <source>
    </source>
</evidence>
<evidence type="ECO:0000269" key="26">
    <source>
    </source>
</evidence>
<evidence type="ECO:0000269" key="27">
    <source>
    </source>
</evidence>
<evidence type="ECO:0000303" key="28">
    <source>
    </source>
</evidence>
<evidence type="ECO:0000303" key="29">
    <source>
    </source>
</evidence>
<evidence type="ECO:0000303" key="30">
    <source>
    </source>
</evidence>
<evidence type="ECO:0000305" key="31"/>
<evidence type="ECO:0000312" key="32">
    <source>
        <dbReference type="HGNC" id="HGNC:3819"/>
    </source>
</evidence>
<evidence type="ECO:0007744" key="33">
    <source>
    </source>
</evidence>
<evidence type="ECO:0007744" key="34">
    <source>
    </source>
</evidence>
<evidence type="ECO:0007744" key="35">
    <source>
    </source>
</evidence>
<evidence type="ECO:0007829" key="36">
    <source>
        <dbReference type="PDB" id="3CO6"/>
    </source>
</evidence>
<evidence type="ECO:0007829" key="37">
    <source>
        <dbReference type="PDB" id="5DUI"/>
    </source>
</evidence>
<organism>
    <name type="scientific">Homo sapiens</name>
    <name type="common">Human</name>
    <dbReference type="NCBI Taxonomy" id="9606"/>
    <lineage>
        <taxon>Eukaryota</taxon>
        <taxon>Metazoa</taxon>
        <taxon>Chordata</taxon>
        <taxon>Craniata</taxon>
        <taxon>Vertebrata</taxon>
        <taxon>Euteleostomi</taxon>
        <taxon>Mammalia</taxon>
        <taxon>Eutheria</taxon>
        <taxon>Euarchontoglires</taxon>
        <taxon>Primates</taxon>
        <taxon>Haplorrhini</taxon>
        <taxon>Catarrhini</taxon>
        <taxon>Hominidae</taxon>
        <taxon>Homo</taxon>
    </lineage>
</organism>
<accession>Q12778</accession>
<accession>O43523</accession>
<accession>Q5VYC7</accession>
<accession>Q6NSK6</accession>
<gene>
    <name evidence="28 32" type="primary">FOXO1</name>
    <name evidence="30" type="synonym">FKHR</name>
    <name type="synonym">FOXO1A</name>
</gene>
<comment type="function">
    <text evidence="1 2 3 7 11 12 14 15 16 19 20 21 23 25">Transcription factor that is the main target of insulin signaling and regulates metabolic homeostasis in response to oxidative stress (PubMed:10358076, PubMed:12228231, PubMed:15220471, PubMed:15890677, PubMed:18356527, PubMed:19221179, PubMed:20543840, PubMed:21245099). Binds to the insulin response element (IRE) with consensus sequence 5'-TT[G/A]TTTTG-3' and the related Daf-16 family binding element (DBE) with consensus sequence 5'-TT[G/A]TTTAC-3' (PubMed:10358076). Activity suppressed by insulin (PubMed:10358076). Main regulator of redox balance and osteoblast numbers and controls bone mass (By similarity). Orchestrates the endocrine function of the skeleton in regulating glucose metabolism (By similarity). Also acts as a key regulator of chondrogenic commitment of skeletal progenitor cells in response to lipid availability: when lipids levels are low, translocates to the nucleus and promotes expression of SOX9, which induces chondrogenic commitment and suppresses fatty acid oxidation (By similarity). Acts synergistically with ATF4 to suppress osteocalcin/BGLAP activity, increasing glucose levels and triggering glucose intolerance and insulin insensitivity (By similarity). Also suppresses the transcriptional activity of RUNX2, an upstream activator of osteocalcin/BGLAP (By similarity). Acts as an inhibitor of glucose sensing in pancreatic beta cells by acting as a transcription repressor and suppressing expression of PDX1 (By similarity). In hepatocytes, promotes gluconeogenesis by acting together with PPARGC1A and CEBPA to activate the expression of genes such as IGFBP1, G6PC1 and PCK1 (By similarity). Also promotes gluconeogenesis by directly promoting expression of PPARGC1A and G6PC1 (PubMed:17024043). Important regulator of cell death acting downstream of CDK1, PKB/AKT1 and STK4/MST1 (PubMed:18356527, PubMed:19221179). Promotes neural cell death (PubMed:18356527). Mediates insulin action on adipose tissue (By similarity). Regulates the expression of adipogenic genes such as PPARG during preadipocyte differentiation and, adipocyte size and adipose tissue-specific gene expression in response to excessive calorie intake (By similarity). Regulates the transcriptional activity of GADD45A and repair of nitric oxide-damaged DNA in beta-cells (By similarity). Required for the autophagic cell death induction in response to starvation or oxidative stress in a transcription-independent manner (PubMed:20543840). Mediates the function of MLIP in cardiomyocytes hypertrophy and cardiac remodeling (By similarity). Positive regulator of apoptosis in cardiac smooth muscle cells as a result of its transcriptional activation of pro-apoptotic genes (PubMed:19483080). Regulates endothelial cell (EC) viability and apoptosis in a PPIA/CYPA-dependent manner via transcription of CCL2 and BCL2L11 which are involved in EC chemotaxis and apoptosis (PubMed:31063815).</text>
</comment>
<comment type="subunit">
    <text evidence="3 8 12 13 14 16 18 20 21 25">Interacts with LRPPRC. Interacts with RUNX2; the interaction inhibits RUNX2 transcriptional activity and mediates the IGF1/insulin-dependent BGLAP expression in osteoblasts Interacts with PPP2R1A; the interaction regulates the dephosphorylation of FOXO1 at Thr-24 and Ser-256 leading to its nuclear import. Interacts (acetylated form) with PPARG. Interacts with XBP1 isoform 2; this interaction is direct and leads to FOXO1 ubiquitination and degradation via the proteasome pathway (By similarity). Interacts with NLK. Interacts with SIRT1; the interaction results in the deacetylation of FOXO1 leading to activation of FOXO1-mediated transcription of genes involved in DNA repair and stress resistance. Binds to CDK1. Interacts with the 14-3-3 proteins, YWHAG and YWHAZ; the interactions require insulin-stimulated phosphorylation on Thr-24, promote nuclear exit and loss of transcriptional activity. Interacts with SKP2; the interaction ubiquitinates FOXO1 leading to its proteasomal degradation. The interaction requires the presence of KRIT1. Interacts (via the C-terminal half) with ATF4 (via its DNA-binding domain); the interaction occurs in osteoblasts, regulates glucose homeostasis via suppression of beta-cell proliferation and subsequent decrease in insulin production. Interacts with PRMT1; the interaction methylates FOXO1, prevents PKB/AKT1 phosphorylation and retains FOXO1 in the nucleus. Interacts with EP300 and CREBBP; the interactions acetylate FOXO1. Interacts with SIRT2; the interaction is disrupted in response to oxidative stress or serum deprivation, leading to increased level of acetylated FOXO1, which promotes stress-induced autophagy by stimulating E1-like activating enzyme ATG7. Interacts (acetylated form) with ATG7; the interaction is increased in response to oxidative stress or serum deprivation and promotes the autophagic process leading to cell death. Interacts (via the Fork-head domain) with CEBPA; the interaction increases when FOXO1 is deacetylated. Interacts with WDFY2. Forms a complex with WDFY2 and AKT1 (By similarity). Interacts with CRY1 (By similarity). Interacts with PPIA/CYPA; the interaction promotes FOXO1 dephosphorylation, nuclear accumulation and transcriptional activity (PubMed:31063815). Interacts with TOX4; FOXO1 is required for full induction of TOX4-dependent activity and the interaction is inhibited by insulin (By similarity). Interacts (when phosphorylated on Ser-256) with STUB1/CHIP (PubMed:19483080).</text>
</comment>
<comment type="interaction">
    <interactant intactId="EBI-1108782">
        <id>Q12778</id>
    </interactant>
    <interactant intactId="EBI-296087">
        <id>P31749</id>
        <label>AKT1</label>
    </interactant>
    <organismsDiffer>false</organismsDiffer>
    <experiments>2</experiments>
</comment>
<comment type="interaction">
    <interactant intactId="EBI-1108782">
        <id>Q12778</id>
    </interactant>
    <interactant intactId="EBI-444308">
        <id>P06493</id>
        <label>CDK1</label>
    </interactant>
    <organismsDiffer>false</organismsDiffer>
    <experiments>5</experiments>
</comment>
<comment type="interaction">
    <interactant intactId="EBI-1108782">
        <id>Q12778</id>
    </interactant>
    <interactant intactId="EBI-81215">
        <id>Q92793</id>
        <label>CREBBP</label>
    </interactant>
    <organismsDiffer>false</organismsDiffer>
    <experiments>3</experiments>
</comment>
<comment type="interaction">
    <interactant intactId="EBI-1108782">
        <id>Q12778</id>
    </interactant>
    <interactant intactId="EBI-78473">
        <id>P03372</id>
        <label>ESR1</label>
    </interactant>
    <organismsDiffer>false</organismsDiffer>
    <experiments>2</experiments>
</comment>
<comment type="interaction">
    <interactant intactId="EBI-1108782">
        <id>Q12778</id>
    </interactant>
    <interactant intactId="EBI-21403286">
        <id>P14921-3</id>
        <label>ETS1</label>
    </interactant>
    <organismsDiffer>false</organismsDiffer>
    <experiments>2</experiments>
</comment>
<comment type="interaction">
    <interactant intactId="EBI-1108782">
        <id>Q12778</id>
    </interactant>
    <interactant intactId="EBI-701903">
        <id>Q14192</id>
        <label>FHL2</label>
    </interactant>
    <organismsDiffer>false</organismsDiffer>
    <experiments>8</experiments>
</comment>
<comment type="interaction">
    <interactant intactId="EBI-1108782">
        <id>Q12778</id>
    </interactant>
    <interactant intactId="EBI-1053182">
        <id>Q01105</id>
        <label>SET</label>
    </interactant>
    <organismsDiffer>false</organismsDiffer>
    <experiments>5</experiments>
</comment>
<comment type="interaction">
    <interactant intactId="EBI-1108782">
        <id>Q12778</id>
    </interactant>
    <interactant intactId="EBI-1802965">
        <id>Q96EB6</id>
        <label>SIRT1</label>
    </interactant>
    <organismsDiffer>false</organismsDiffer>
    <experiments>4</experiments>
</comment>
<comment type="interaction">
    <interactant intactId="EBI-1108782">
        <id>Q12778</id>
    </interactant>
    <interactant intactId="EBI-356498">
        <id>P62258</id>
        <label>YWHAE</label>
    </interactant>
    <organismsDiffer>false</organismsDiffer>
    <experiments>5</experiments>
</comment>
<comment type="interaction">
    <interactant intactId="EBI-1108782">
        <id>Q12778</id>
    </interactant>
    <interactant intactId="EBI-347088">
        <id>P63104</id>
        <label>YWHAZ</label>
    </interactant>
    <organismsDiffer>false</organismsDiffer>
    <experiments>6</experiments>
</comment>
<comment type="interaction">
    <interactant intactId="EBI-1108782">
        <id>Q12778</id>
    </interactant>
    <interactant intactId="EBI-1802585">
        <id>Q923E4</id>
        <label>Sirt1</label>
    </interactant>
    <organismsDiffer>true</organismsDiffer>
    <experiments>2</experiments>
</comment>
<comment type="subcellular location">
    <subcellularLocation>
        <location evidence="8 9 11 19 21 23 24 25">Cytoplasm</location>
    </subcellularLocation>
    <subcellularLocation>
        <location evidence="9 11 21 24 25">Nucleus</location>
    </subcellularLocation>
    <text evidence="3 8 9 11 16 19 21 23 24 25">Shuttles between the cytoplasm and nucleus. Largely nuclear in unstimulated cells (PubMed:11311120, PubMed:12228231, PubMed:19221179, PubMed:20543840, PubMed:21245099, PubMed:25009184). In osteoblasts, colocalizes with ATF4 and RUNX2 in the nucleus (By similarity). Serum deprivation increases localization to the nucleus, leading to activate expression of SOX9 and subsequent chondrogenesis (By similarity). Insulin-induced phosphorylation at Ser-256 by PKB/AKT1 leads, via stimulation of Thr-24 phosphorylation, to binding of 14-3-3 proteins and nuclear export to the cytoplasm where it is degraded by the ubiquitin-proteasomal pathway (PubMed:11237865, PubMed:12228231). Phosphorylation at Ser-249 by CDK1 disrupts binding of 14-3-3 proteins and promotes nuclear accumulation (PubMed:18356527). Phosphorylation by NLK results in nuclear export (By similarity). Translocates to the nucleus upon oxidative stress-induced phosphorylation at Ser-212 by STK4/MST1 (PubMed:19221179, PubMed:21245099). SGK1-mediated phosphorylation also results in nuclear translocation (By similarity). Retained in the nucleus under stress stimuli including oxidative stress, nutrient deprivation or nitric oxide (By similarity). Retained in the nucleus on methylation (By similarity). PPIA/CYPA stimulates its nuclear accumulation (PubMed:31063815). Deacetylation by SIRT6, promotes its translocation into the cytoplasm (PubMed:25009184).</text>
</comment>
<comment type="tissue specificity">
    <text evidence="20 27">Expressed in umbilical endothelial cells (at protein level) (PubMed:19483080). Abundantly expressed in skeletal muscle and ovary, with lower expression in the heart, placenta, lung, liver, pancreas, spleen, testis and small intestine (PubMed:9479491). Weakly expressed in the brain, thymus, prostate and mucosal lining of the colon (PubMed:9479491).</text>
</comment>
<comment type="induction">
    <text evidence="22">Expression is regulated by KRIT1. Levels of expression also regulated by FOXC1 which binds to a conserved element in the FOXO1 promoter.</text>
</comment>
<comment type="PTM">
    <text evidence="3 6 7 8 9 10 16 17 19 23 25">Phosphorylation by NLK promotes nuclear export and inhibits the transcriptional activity. In response to growth factors, phosphorylation on Thr-24, Ser-256 and Ser-322 by PKB/AKT1 promotes nuclear export and inactivation of transactivational activity. Phosphorylation on Thr-24 is required for binding 14-3-3 proteins. Phosphorylation of Ser-256 decreases DNA-binding activity and promotes the phosphorylation of Thr-24 and Ser-319, permitting phosphorylation of Ser-322 and Ser-325, probably by CDK1, leading to nuclear exclusion and loss of function. Stress signals, such as response to oxygen or nitric oxide, attenuate the PKB/AKT1-mediated phosphorylation leading to nuclear retention. Phosphorylation of Ser-329 is independent of IGF1 and leads to reduced function. Dephosphorylated on Thr-24 and Ser-256 by PP2A in beta-cells under oxidative stress leading to nuclear retention (By similarity). Phosphorylation of Ser-249 by CDK1 disrupts binding of 14-3-3 proteins leading to nuclear accumulation and has no effect on DNA-binding nor transcriptional activity. Phosphorylation by STK4/MST1 on Ser-212, upon oxidative stress, inhibits binding to 14-3-3 proteins and nuclear export. PPIA/CYPA promotes its dephosphorylation on Ser-256 (PubMed:31063815).</text>
</comment>
<comment type="PTM">
    <text evidence="13 20">Ubiquitinated by SKP2 (PubMed:15668399). Ubiquitination leads to proteasomal degradation (PubMed:19483080). Ubiquitinated by STUB1/CHIP; when Ser-256 is phosphorylated (PubMed:19483080).</text>
</comment>
<comment type="PTM">
    <text evidence="3">Methylation inhibits AKT1-mediated phosphorylation at Ser-256 and is increased by oxidative stress.</text>
</comment>
<comment type="PTM">
    <text evidence="3 12 14 17 21 24">Acetylated (PubMed:15220471, PubMed:15890677, PubMed:18786403, PubMed:20543840). Acetylation at Lys-262, Lys-265 and Lys-274 are necessary for autophagic cell death induction (PubMed:20543840). Deacetylated by SIRT2 in response to oxidative stress or serum deprivation, thereby negatively regulating FOXO1-mediated autophagic cell death (PubMed:20543840). Once in the nucleus, acetylated by CREBBP/EP300 (PubMed:15220471, PubMed:15890677, PubMed:18786403). Acetylation diminishes the interaction with target DNA and attenuates the transcriptional activity. It increases the phosphorylation at Ser-256 (PubMed:15220471, PubMed:15890677, PubMed:18786403). Deacetylation by SIRT1 results in reactivation of the transcriptional activity (PubMed:15220471, PubMed:15890677, PubMed:18786403). Oxidative stress by hydrogen peroxide treatment appears to promote deacetylation and uncoupling of insulin-induced phosphorylation (PubMed:15220471, PubMed:15890677, PubMed:18786403). By contrast, resveratrol acts independently of acetylation (PubMed:15220471, PubMed:15890677, PubMed:18786403). Acetylated at Lys-423, promoting its localization to the nucleus and transcription factor activity (PubMed:25009184). Deacetylation at Lys-423 by SIRT6, promotes its translocation into the cytoplasm, preventing its transcription factor activity (PubMed:25009184). Deacetylation and subsequent inhibition by SIRT6 has different effects depending on cell types: it inhibits gluconeogenesis in hepatocytes, promotes glucose sensing in pancreatic beta-cells and regulates lipid catabolism in brown adipocytes (By similarity).</text>
</comment>
<comment type="disease">
    <disease id="DI-02699">
        <name>Rhabdomyosarcoma 2</name>
        <acronym>RMS2</acronym>
        <description>A form of rhabdomyosarcoma, a highly malignant tumor of striated muscle derived from primitive mesenchymal cells and exhibiting differentiation along rhabdomyoblastic lines. Rhabdomyosarcoma is one of the most frequently occurring soft tissue sarcomas and the most common in children. It occurs in four forms: alveolar, pleomorphic, embryonal and botryoidal rhabdomyosarcomas.</description>
        <dbReference type="MIM" id="268220"/>
    </disease>
    <text evidence="26">The gene represented in this entry may be involved in disease pathogenesis. Chromosomal aberrations involving FOXO1 are found in rhabdomyosarcoma. Translocation (2;13)(q35;q14) with PAX3 and translocation t(1;13)(p36;q14) with PAX7. The resulting protein is a transcriptional activator.</text>
</comment>
<comment type="online information" name="Atlas of Genetics and Cytogenetics in Oncology and Haematology">
    <link uri="https://atlasgeneticsoncology.org/gene/83/FOXO1"/>
</comment>
<keyword id="KW-0002">3D-structure</keyword>
<keyword id="KW-0007">Acetylation</keyword>
<keyword id="KW-0010">Activator</keyword>
<keyword id="KW-0053">Apoptosis</keyword>
<keyword id="KW-0072">Autophagy</keyword>
<keyword id="KW-0160">Chromosomal rearrangement</keyword>
<keyword id="KW-0963">Cytoplasm</keyword>
<keyword id="KW-0221">Differentiation</keyword>
<keyword id="KW-0238">DNA-binding</keyword>
<keyword id="KW-0488">Methylation</keyword>
<keyword id="KW-0539">Nucleus</keyword>
<keyword id="KW-0597">Phosphoprotein</keyword>
<keyword id="KW-1267">Proteomics identification</keyword>
<keyword id="KW-0656">Proto-oncogene</keyword>
<keyword id="KW-1185">Reference proteome</keyword>
<keyword id="KW-0804">Transcription</keyword>
<keyword id="KW-0805">Transcription regulation</keyword>
<keyword id="KW-0832">Ubl conjugation</keyword>
<reference key="1">
    <citation type="journal article" date="1993" name="Nat. Genet.">
        <title>Fusion of a fork head domain gene to PAX3 in the solid tumour alveolar rhabdomyosarcoma.</title>
        <authorList>
            <person name="Galili N."/>
            <person name="Davis R.J."/>
            <person name="Fredericks W.J."/>
            <person name="Mukhopadhyay S."/>
            <person name="Rauscher F.J. III"/>
            <person name="Emanuel B.S."/>
            <person name="Rovera G."/>
            <person name="Barr F.G."/>
        </authorList>
    </citation>
    <scope>NUCLEOTIDE SEQUENCE [MRNA]</scope>
    <scope>CHROMOSOMAL TRANSLOCATION WITH PAX3</scope>
</reference>
<reference key="2">
    <citation type="journal article" date="1998" name="Genomics">
        <title>Cloning and characterization of three human forkhead genes that comprise an FKHR-like gene subfamily.</title>
        <authorList>
            <person name="Anderson M.J."/>
            <person name="Viars C.S."/>
            <person name="Czekay S."/>
            <person name="Cavenee W.K."/>
            <person name="Arden K.C."/>
        </authorList>
    </citation>
    <scope>NUCLEOTIDE SEQUENCE [MRNA]</scope>
    <scope>TISSUE SPECIFICITY</scope>
    <source>
        <tissue>Rhabdomyosarcoma</tissue>
    </source>
</reference>
<reference key="3">
    <citation type="submission" date="2003-05" db="EMBL/GenBank/DDBJ databases">
        <title>Cloning of human full-length CDSs in BD Creator(TM) system donor vector.</title>
        <authorList>
            <person name="Kalnine N."/>
            <person name="Chen X."/>
            <person name="Rolfs A."/>
            <person name="Halleck A."/>
            <person name="Hines L."/>
            <person name="Eisenstein S."/>
            <person name="Koundinya M."/>
            <person name="Raphael J."/>
            <person name="Moreira D."/>
            <person name="Kelley T."/>
            <person name="LaBaer J."/>
            <person name="Lin Y."/>
            <person name="Phelan M."/>
            <person name="Farmer A."/>
        </authorList>
    </citation>
    <scope>NUCLEOTIDE SEQUENCE [LARGE SCALE MRNA]</scope>
</reference>
<reference key="4">
    <citation type="journal article" date="2004" name="Nature">
        <title>The DNA sequence and analysis of human chromosome 13.</title>
        <authorList>
            <person name="Dunham A."/>
            <person name="Matthews L.H."/>
            <person name="Burton J."/>
            <person name="Ashurst J.L."/>
            <person name="Howe K.L."/>
            <person name="Ashcroft K.J."/>
            <person name="Beare D.M."/>
            <person name="Burford D.C."/>
            <person name="Hunt S.E."/>
            <person name="Griffiths-Jones S."/>
            <person name="Jones M.C."/>
            <person name="Keenan S.J."/>
            <person name="Oliver K."/>
            <person name="Scott C.E."/>
            <person name="Ainscough R."/>
            <person name="Almeida J.P."/>
            <person name="Ambrose K.D."/>
            <person name="Andrews D.T."/>
            <person name="Ashwell R.I.S."/>
            <person name="Babbage A.K."/>
            <person name="Bagguley C.L."/>
            <person name="Bailey J."/>
            <person name="Bannerjee R."/>
            <person name="Barlow K.F."/>
            <person name="Bates K."/>
            <person name="Beasley H."/>
            <person name="Bird C.P."/>
            <person name="Bray-Allen S."/>
            <person name="Brown A.J."/>
            <person name="Brown J.Y."/>
            <person name="Burrill W."/>
            <person name="Carder C."/>
            <person name="Carter N.P."/>
            <person name="Chapman J.C."/>
            <person name="Clamp M.E."/>
            <person name="Clark S.Y."/>
            <person name="Clarke G."/>
            <person name="Clee C.M."/>
            <person name="Clegg S.C."/>
            <person name="Cobley V."/>
            <person name="Collins J.E."/>
            <person name="Corby N."/>
            <person name="Coville G.J."/>
            <person name="Deloukas P."/>
            <person name="Dhami P."/>
            <person name="Dunham I."/>
            <person name="Dunn M."/>
            <person name="Earthrowl M.E."/>
            <person name="Ellington A.G."/>
            <person name="Faulkner L."/>
            <person name="Frankish A.G."/>
            <person name="Frankland J."/>
            <person name="French L."/>
            <person name="Garner P."/>
            <person name="Garnett J."/>
            <person name="Gilbert J.G.R."/>
            <person name="Gilson C.J."/>
            <person name="Ghori J."/>
            <person name="Grafham D.V."/>
            <person name="Gribble S.M."/>
            <person name="Griffiths C."/>
            <person name="Hall R.E."/>
            <person name="Hammond S."/>
            <person name="Harley J.L."/>
            <person name="Hart E.A."/>
            <person name="Heath P.D."/>
            <person name="Howden P.J."/>
            <person name="Huckle E.J."/>
            <person name="Hunt P.J."/>
            <person name="Hunt A.R."/>
            <person name="Johnson C."/>
            <person name="Johnson D."/>
            <person name="Kay M."/>
            <person name="Kimberley A.M."/>
            <person name="King A."/>
            <person name="Laird G.K."/>
            <person name="Langford C.J."/>
            <person name="Lawlor S."/>
            <person name="Leongamornlert D.A."/>
            <person name="Lloyd D.M."/>
            <person name="Lloyd C."/>
            <person name="Loveland J.E."/>
            <person name="Lovell J."/>
            <person name="Martin S."/>
            <person name="Mashreghi-Mohammadi M."/>
            <person name="McLaren S.J."/>
            <person name="McMurray A."/>
            <person name="Milne S."/>
            <person name="Moore M.J.F."/>
            <person name="Nickerson T."/>
            <person name="Palmer S.A."/>
            <person name="Pearce A.V."/>
            <person name="Peck A.I."/>
            <person name="Pelan S."/>
            <person name="Phillimore B."/>
            <person name="Porter K.M."/>
            <person name="Rice C.M."/>
            <person name="Searle S."/>
            <person name="Sehra H.K."/>
            <person name="Shownkeen R."/>
            <person name="Skuce C.D."/>
            <person name="Smith M."/>
            <person name="Steward C.A."/>
            <person name="Sycamore N."/>
            <person name="Tester J."/>
            <person name="Thomas D.W."/>
            <person name="Tracey A."/>
            <person name="Tromans A."/>
            <person name="Tubby B."/>
            <person name="Wall M."/>
            <person name="Wallis J.M."/>
            <person name="West A.P."/>
            <person name="Whitehead S.L."/>
            <person name="Willey D.L."/>
            <person name="Wilming L."/>
            <person name="Wray P.W."/>
            <person name="Wright M.W."/>
            <person name="Young L."/>
            <person name="Coulson A."/>
            <person name="Durbin R.M."/>
            <person name="Hubbard T."/>
            <person name="Sulston J.E."/>
            <person name="Beck S."/>
            <person name="Bentley D.R."/>
            <person name="Rogers J."/>
            <person name="Ross M.T."/>
        </authorList>
    </citation>
    <scope>NUCLEOTIDE SEQUENCE [LARGE SCALE GENOMIC DNA]</scope>
</reference>
<reference key="5">
    <citation type="journal article" date="2004" name="Genome Res.">
        <title>The status, quality, and expansion of the NIH full-length cDNA project: the Mammalian Gene Collection (MGC).</title>
        <authorList>
            <consortium name="The MGC Project Team"/>
        </authorList>
    </citation>
    <scope>NUCLEOTIDE SEQUENCE [LARGE SCALE MRNA]</scope>
    <source>
        <tissue>Lymph</tissue>
        <tissue>Placenta</tissue>
    </source>
</reference>
<reference key="6">
    <citation type="journal article" date="1994" name="Cancer Res.">
        <title>Fusion of PAX7 to FKHR by the variant t(1;13)(p36;q14) translocation in alveolar rhabdomyosarcoma.</title>
        <authorList>
            <person name="Davis R.J."/>
            <person name="D'Cruz C.M."/>
            <person name="Lovell M.A."/>
            <person name="Biegel J.A."/>
            <person name="Barr F.G."/>
        </authorList>
    </citation>
    <scope>CHROMOSOMAL TRANSLOCATION WITH PAX7</scope>
</reference>
<reference key="7">
    <citation type="journal article" date="1999" name="J. Biol. Chem.">
        <title>Phosphorylation of the transcription factor forkhead family member FKHR by protein kinase B.</title>
        <authorList>
            <person name="Rena G."/>
            <person name="Guo S."/>
            <person name="Cichy S.C."/>
            <person name="Unterman T.G."/>
            <person name="Cohen P."/>
        </authorList>
    </citation>
    <scope>PHOSPHORYLATION AT THR-24; SER-256 AND SER-319</scope>
</reference>
<reference key="8">
    <citation type="journal article" date="1999" name="J. Biol. Chem.">
        <title>Phosphorylation of serine 256 by protein kinase B disrupts transactivation by FKHR and mediates effects of insulin on insulin-like growth factor-binding protein-1 promoter activity through a conserved insulin response sequence.</title>
        <authorList>
            <person name="Guo S."/>
            <person name="Rena G."/>
            <person name="Cichy S."/>
            <person name="He X."/>
            <person name="Cohen P."/>
            <person name="Unterman T."/>
        </authorList>
    </citation>
    <scope>DNA-BINDING</scope>
    <scope>PHOSPHORYLATION AT SER-256</scope>
    <scope>FUNCTION</scope>
</reference>
<reference key="9">
    <citation type="journal article" date="2001" name="Biochem. J.">
        <title>The kinase DYRK1A phosphorylates the transcription factor FKHR at Ser329 in vitro, a novel in vivo phosphorylation site.</title>
        <authorList>
            <person name="Woods Y.L."/>
            <person name="Rena G."/>
            <person name="Morrice N."/>
            <person name="Barthel A."/>
            <person name="Becker W."/>
            <person name="Guo S."/>
            <person name="Unterman T.G."/>
            <person name="Cohen P."/>
        </authorList>
    </citation>
    <scope>SUBCELLULAR LOCATION</scope>
    <scope>PHOSPHORYLATION AT SER-329</scope>
    <scope>MUTAGENESIS OF SER-329</scope>
</reference>
<reference key="10">
    <citation type="journal article" date="2001" name="Biochem. J.">
        <title>Roles of the forkhead in rhabdomyosarcoma (FKHR) phosphorylation sites in regulating 14-3-3 binding, transactivation and nuclear targetting.</title>
        <authorList>
            <person name="Rena G."/>
            <person name="Prescott A.R."/>
            <person name="Guo S."/>
            <person name="Cohen P."/>
            <person name="Unterman T.G."/>
        </authorList>
    </citation>
    <scope>INTERACTION WITH YWHAG AND YWHAZ</scope>
    <scope>PHOSPHORYLATION AT THR-24; SER-256 AND SER-319</scope>
    <scope>SUBCELLULAR LOCATION</scope>
    <scope>MUTAGENESIS OF THR-24; SER-256 AND SER-319</scope>
</reference>
<reference key="11">
    <citation type="journal article" date="2002" name="EMBO J.">
        <title>Two novel phosphorylation sites on FKHR that are critical for its nuclear exclusion.</title>
        <authorList>
            <person name="Rena G."/>
            <person name="Woods Y.L."/>
            <person name="Prescott A.R."/>
            <person name="Peggie M."/>
            <person name="Unterman T.G."/>
            <person name="Williams M.R."/>
            <person name="Cohen P."/>
        </authorList>
    </citation>
    <scope>PHOSPHORYLATION AT THR-24; SER-256; SER-319; SER-322; SER-325 AND SER-329</scope>
</reference>
<reference key="12">
    <citation type="journal article" date="2002" name="J. Biol. Chem.">
        <title>Phosphorylation of serine 256 suppresses transactivation by FKHR (FOXO1) by multiple mechanisms. Direct and indirect effects on nuclear/cytoplasmic shuttling and DNA binding.</title>
        <authorList>
            <person name="Zhang X."/>
            <person name="Gan L."/>
            <person name="Pan H."/>
            <person name="Guo S."/>
            <person name="He X."/>
            <person name="Olson S.T."/>
            <person name="Mesecar A."/>
            <person name="Adam S."/>
            <person name="Unterman T.G."/>
        </authorList>
    </citation>
    <scope>FUNCTION</scope>
    <scope>SUBCELLULAR LOCATION</scope>
    <scope>MUTAGENESIS OF THR-24; LYS-245; LYS-248; 251-ARG--ARG-253; SER-256; LYS-262; LYS-265; LYS-274 AND SER-319</scope>
</reference>
<reference key="13">
    <citation type="journal article" date="2004" name="Proc. Natl. Acad. Sci. U.S.A.">
        <title>Silent information regulator 2 potentiates Foxo1-mediated transcription through its deacetylase activity.</title>
        <authorList>
            <person name="Daitoku H."/>
            <person name="Hatta M."/>
            <person name="Matsuzaki H."/>
            <person name="Aratani S."/>
            <person name="Ohshima T."/>
            <person name="Miyagishi M."/>
            <person name="Nakajima T."/>
            <person name="Fukamizu A."/>
        </authorList>
    </citation>
    <scope>INTERACTION WITH CREBBP AND SIRT1</scope>
    <scope>ACETYLATION</scope>
    <scope>DEACETYLATION</scope>
    <scope>FUNCTION</scope>
</reference>
<reference key="14">
    <citation type="journal article" date="2005" name="Mol. Endocrinol.">
        <title>The coactivator p300 directly acetylates the forkhead transcription factor Foxo1 and stimulates Foxo1-induced transcription.</title>
        <authorList>
            <person name="Perrot V."/>
            <person name="Rechler M.M."/>
        </authorList>
    </citation>
    <scope>INTERACTION WITH EP300</scope>
    <scope>ACETYLATION</scope>
    <scope>SUBCELLULAR LOCATION</scope>
    <scope>PHOSPHORYLATION</scope>
    <scope>FUNCTION</scope>
</reference>
<reference key="15">
    <citation type="journal article" date="2005" name="Proc. Natl. Acad. Sci. U.S.A.">
        <title>Skp2 inhibits FOXO1 in tumor suppression through ubiquitin-mediated degradation.</title>
        <authorList>
            <person name="Huang H."/>
            <person name="Regan K.M."/>
            <person name="Wang F."/>
            <person name="Wang D."/>
            <person name="Smith D.I."/>
            <person name="van Deursen J.M."/>
            <person name="Tindall D.J."/>
        </authorList>
    </citation>
    <scope>INTERACTION WITH SKP2</scope>
    <scope>UBIQUITINATION</scope>
    <scope>MUTAGENESIS OF SER-256</scope>
</reference>
<reference key="16">
    <citation type="journal article" date="2006" name="Nature">
        <title>Gluconeogenesis: re-evaluating the FOXO1-PGC-1alpha connection.</title>
        <authorList>
            <person name="Schilling M.M."/>
            <person name="Oeser J.K."/>
            <person name="Boustead J.N."/>
            <person name="Flemming B.P."/>
            <person name="O'Brien R.M."/>
        </authorList>
    </citation>
    <scope>FUNCTION</scope>
</reference>
<reference key="17">
    <citation type="journal article" date="2008" name="Mol. Cell">
        <title>Arginine methylation of FOXO transcription factors inhibits their phosphorylation by Akt.</title>
        <authorList>
            <person name="Yamagata K."/>
            <person name="Daitoku H."/>
            <person name="Takahashi Y."/>
            <person name="Namiki K."/>
            <person name="Hisatake K."/>
            <person name="Kako K."/>
            <person name="Mukai H."/>
            <person name="Kasuya Y."/>
            <person name="Fukamizu A."/>
        </authorList>
    </citation>
    <scope>INTERACTION WITH PRMT1</scope>
</reference>
<reference key="18">
    <citation type="journal article" date="2008" name="Proc. Natl. Acad. Sci. U.S.A.">
        <title>A quantitative atlas of mitotic phosphorylation.</title>
        <authorList>
            <person name="Dephoure N."/>
            <person name="Zhou C."/>
            <person name="Villen J."/>
            <person name="Beausoleil S.A."/>
            <person name="Bakalarski C.E."/>
            <person name="Elledge S.J."/>
            <person name="Gygi S.P."/>
        </authorList>
    </citation>
    <scope>PHOSPHORYLATION [LARGE SCALE ANALYSIS] AT SER-287</scope>
    <scope>IDENTIFICATION BY MASS SPECTROMETRY [LARGE SCALE ANALYSIS]</scope>
    <source>
        <tissue>Cervix carcinoma</tissue>
    </source>
</reference>
<reference key="19">
    <citation type="journal article" date="2008" name="Science">
        <title>Activation of FOXO1 by Cdk1 in cycling cells and postmitotic neurons.</title>
        <authorList>
            <person name="Yuan Z."/>
            <person name="Becker E.B.E."/>
            <person name="Merlo P."/>
            <person name="Yamada T."/>
            <person name="DiBacco S."/>
            <person name="Konishi Y."/>
            <person name="Schaefer E.M."/>
            <person name="Bonni A."/>
        </authorList>
    </citation>
    <scope>FUNCTION</scope>
    <scope>PHOSPHORYLATION AT SER-249 BY CDK1</scope>
    <scope>INTERACTION WITH CDK1 AND 14-3-3 PROTEINS</scope>
    <scope>MUTAGENESIS OF SER-249</scope>
</reference>
<reference key="20">
    <citation type="journal article" date="2009" name="Anal. Chem.">
        <title>Lys-N and trypsin cover complementary parts of the phosphoproteome in a refined SCX-based approach.</title>
        <authorList>
            <person name="Gauci S."/>
            <person name="Helbig A.O."/>
            <person name="Slijper M."/>
            <person name="Krijgsveld J."/>
            <person name="Heck A.J."/>
            <person name="Mohammed S."/>
        </authorList>
    </citation>
    <scope>IDENTIFICATION BY MASS SPECTROMETRY [LARGE SCALE ANALYSIS]</scope>
</reference>
<reference key="21">
    <citation type="journal article" date="2009" name="J. Biol. Chem.">
        <title>C terminus of Hsc70-interacting protein promotes smooth muscle cell proliferation and survival through ubiquitin-mediated degradation of FoxO1.</title>
        <authorList>
            <person name="Li F."/>
            <person name="Xie P."/>
            <person name="Fan Y."/>
            <person name="Zhang H."/>
            <person name="Zheng L."/>
            <person name="Gu D."/>
            <person name="Patterson C."/>
            <person name="Li H."/>
        </authorList>
    </citation>
    <scope>FUNCTION</scope>
    <scope>INTERACTION WITH STUB1</scope>
    <scope>TISSUE SPECIFICITY</scope>
    <scope>UBIQUITINATION</scope>
    <scope>MUTAGENESIS OF THR-24; SER-256 AND SER-319</scope>
</reference>
<reference key="22">
    <citation type="journal article" date="2009" name="J. Biol. Chem.">
        <title>Regulation of neuronal cell death by MST1-FOXO1 signaling.</title>
        <authorList>
            <person name="Yuan Z."/>
            <person name="Lehtinen M.K."/>
            <person name="Merlo P."/>
            <person name="Villen J."/>
            <person name="Gygi S."/>
            <person name="Bonni A."/>
        </authorList>
    </citation>
    <scope>PHOSPHORYLATION AT SER-212</scope>
    <scope>SUBCELLULAR LOCATION</scope>
    <scope>FUNCTION</scope>
    <scope>MUTAGENESIS OF SER-212</scope>
</reference>
<reference key="23">
    <citation type="journal article" date="2010" name="Nat. Cell Biol.">
        <title>Cytosolic FoxO1 is essential for the induction of autophagy and tumour suppressor activity.</title>
        <authorList>
            <person name="Zhao Y."/>
            <person name="Yang J."/>
            <person name="Liao W."/>
            <person name="Liu X."/>
            <person name="Zhang H."/>
            <person name="Wang S."/>
            <person name="Wang D."/>
            <person name="Feng J."/>
            <person name="Yu L."/>
            <person name="Zhu W.G."/>
        </authorList>
    </citation>
    <scope>ACETYLATION AT LYS-262; LYS-265 AND LYS-274</scope>
    <scope>DEACETYLATION BY SIRT2</scope>
    <scope>FUNCTION IN AUTOPHAGY</scope>
    <scope>SUBCELLULAR LOCATION</scope>
    <scope>INTERACTION WITH SIRT2 AND ATG7</scope>
</reference>
<reference key="24">
    <citation type="journal article" date="2010" name="PLoS ONE">
        <title>KRIT1 regulates the homeostasis of intracellular reactive oxygen species.</title>
        <authorList>
            <person name="Goitre L."/>
            <person name="Balzac F."/>
            <person name="Degani S."/>
            <person name="Degan P."/>
            <person name="Marchi S."/>
            <person name="Pinton P."/>
            <person name="Retta S.F."/>
        </authorList>
    </citation>
    <scope>INDUCTION</scope>
</reference>
<reference key="25">
    <citation type="journal article" date="2010" name="Sci. Signal.">
        <title>Quantitative phosphoproteomics reveals widespread full phosphorylation site occupancy during mitosis.</title>
        <authorList>
            <person name="Olsen J.V."/>
            <person name="Vermeulen M."/>
            <person name="Santamaria A."/>
            <person name="Kumar C."/>
            <person name="Miller M.L."/>
            <person name="Jensen L.J."/>
            <person name="Gnad F."/>
            <person name="Cox J."/>
            <person name="Jensen T.S."/>
            <person name="Nigg E.A."/>
            <person name="Brunak S."/>
            <person name="Mann M."/>
        </authorList>
    </citation>
    <scope>PHOSPHORYLATION [LARGE SCALE ANALYSIS] AT SER-287</scope>
    <scope>IDENTIFICATION BY MASS SPECTROMETRY [LARGE SCALE ANALYSIS]</scope>
    <source>
        <tissue>Cervix carcinoma</tissue>
    </source>
</reference>
<reference key="26">
    <citation type="journal article" date="2011" name="Cancer Res.">
        <title>Hippo/Mst1 stimulates transcription of the proapoptotic mediator NOXA in a FoxO1-dependent manner.</title>
        <authorList>
            <person name="Valis K."/>
            <person name="Prochazka L."/>
            <person name="Boura E."/>
            <person name="Chladova J."/>
            <person name="Obsil T."/>
            <person name="Rohlena J."/>
            <person name="Truksa J."/>
            <person name="Dong L.F."/>
            <person name="Ralph S.J."/>
            <person name="Neuzil J."/>
        </authorList>
    </citation>
    <scope>FUNCTION</scope>
    <scope>SUBCELLULAR LOCATION</scope>
    <scope>PHOSPHORYLATION AT SER-212</scope>
</reference>
<reference key="27">
    <citation type="journal article" date="2011" name="Sci. Signal.">
        <title>System-wide temporal characterization of the proteome and phosphoproteome of human embryonic stem cell differentiation.</title>
        <authorList>
            <person name="Rigbolt K.T."/>
            <person name="Prokhorova T.A."/>
            <person name="Akimov V."/>
            <person name="Henningsen J."/>
            <person name="Johansen P.T."/>
            <person name="Kratchmarova I."/>
            <person name="Kassem M."/>
            <person name="Mann M."/>
            <person name="Olsen J.V."/>
            <person name="Blagoev B."/>
        </authorList>
    </citation>
    <scope>PHOSPHORYLATION [LARGE SCALE ANALYSIS] AT SER-287</scope>
    <scope>IDENTIFICATION BY MASS SPECTROMETRY [LARGE SCALE ANALYSIS]</scope>
</reference>
<reference key="28">
    <citation type="journal article" date="2013" name="J. Proteome Res.">
        <title>Toward a comprehensive characterization of a human cancer cell phosphoproteome.</title>
        <authorList>
            <person name="Zhou H."/>
            <person name="Di Palma S."/>
            <person name="Preisinger C."/>
            <person name="Peng M."/>
            <person name="Polat A.N."/>
            <person name="Heck A.J."/>
            <person name="Mohammed S."/>
        </authorList>
    </citation>
    <scope>IDENTIFICATION BY MASS SPECTROMETRY [LARGE SCALE ANALYSIS]</scope>
    <source>
        <tissue>Cervix carcinoma</tissue>
    </source>
</reference>
<reference key="29">
    <citation type="journal article" date="2014" name="Proc. Natl. Acad. Sci. U.S.A.">
        <title>Tumor suppressor p53 cooperates with SIRT6 to regulate gluconeogenesis by promoting FoxO1 nuclear exclusion.</title>
        <authorList>
            <person name="Zhang P."/>
            <person name="Tu B."/>
            <person name="Wang H."/>
            <person name="Cao Z."/>
            <person name="Tang M."/>
            <person name="Zhang C."/>
            <person name="Gu B."/>
            <person name="Li Z."/>
            <person name="Wang L."/>
            <person name="Yang Y."/>
            <person name="Zhao Y."/>
            <person name="Wang H."/>
            <person name="Luo J."/>
            <person name="Deng C.X."/>
            <person name="Gao B."/>
            <person name="Roeder R.G."/>
            <person name="Zhu W.G."/>
        </authorList>
    </citation>
    <scope>ACETYLATION AT LYS-423</scope>
    <scope>DEACETYLATION BY SIRT6</scope>
    <scope>SUBCELLULAR LOCATION</scope>
    <scope>MUTAGENESIS OF LYS-423; LYS-446; LYS-463 AND LYS-515</scope>
</reference>
<reference key="30">
    <citation type="journal article" date="2019" name="Cell. Signal.">
        <title>Cyclophilin A-FoxO1 signaling pathway in endothelial cell apoptosis.</title>
        <authorList>
            <person name="Xie Y."/>
            <person name="Li X."/>
            <person name="Ge J."/>
        </authorList>
    </citation>
    <scope>FUNCTION</scope>
    <scope>SUBCELLULAR LOCATION</scope>
    <scope>PHOSPHORYLATION AT SER-256</scope>
    <scope>DEPHOSPHORYLATION AT SER-256</scope>
    <scope>INTERACTION WITH PPIA</scope>
</reference>
<reference key="31">
    <citation type="journal article" date="2008" name="Structure">
        <title>Structural basis for DNA recognition by FoxO1 and its regulation by posttranslational modification.</title>
        <authorList>
            <person name="Brent M.M."/>
            <person name="Anand R."/>
            <person name="Marmorstein R."/>
        </authorList>
    </citation>
    <scope>X-RAY CRYSTALLOGRAPHY (2.2 ANGSTROMS) OF 151-266</scope>
    <scope>DNA-BINDING</scope>
    <scope>PHOSPHORYLATION AT SER-212; SER-218; SER-234 AND SER-235</scope>
    <scope>ACETYLATION</scope>
    <scope>IDENTIFICATION BY MASS SPECTROMETRY</scope>
    <scope>MUTAGENESIS OF SER-249</scope>
</reference>